<reference key="1">
    <citation type="journal article" date="2002" name="J. Bacteriol.">
        <title>Whole-genome comparison of Mycobacterium tuberculosis clinical and laboratory strains.</title>
        <authorList>
            <person name="Fleischmann R.D."/>
            <person name="Alland D."/>
            <person name="Eisen J.A."/>
            <person name="Carpenter L."/>
            <person name="White O."/>
            <person name="Peterson J.D."/>
            <person name="DeBoy R.T."/>
            <person name="Dodson R.J."/>
            <person name="Gwinn M.L."/>
            <person name="Haft D.H."/>
            <person name="Hickey E.K."/>
            <person name="Kolonay J.F."/>
            <person name="Nelson W.C."/>
            <person name="Umayam L.A."/>
            <person name="Ermolaeva M.D."/>
            <person name="Salzberg S.L."/>
            <person name="Delcher A."/>
            <person name="Utterback T.R."/>
            <person name="Weidman J.F."/>
            <person name="Khouri H.M."/>
            <person name="Gill J."/>
            <person name="Mikula A."/>
            <person name="Bishai W."/>
            <person name="Jacobs W.R. Jr."/>
            <person name="Venter J.C."/>
            <person name="Fraser C.M."/>
        </authorList>
    </citation>
    <scope>NUCLEOTIDE SEQUENCE [LARGE SCALE GENOMIC DNA]</scope>
    <source>
        <strain>CDC 1551 / Oshkosh</strain>
    </source>
</reference>
<keyword id="KW-0233">DNA recombination</keyword>
<keyword id="KW-0238">DNA-binding</keyword>
<keyword id="KW-1185">Reference proteome</keyword>
<keyword id="KW-0814">Transposable element</keyword>
<keyword id="KW-0815">Transposition</keyword>
<accession>P9WKH8</accession>
<accession>L0TCB7</accession>
<accession>O08154</accession>
<accession>O08156</accession>
<accession>O08159</accession>
<accession>O33355</accession>
<accession>P0C5G8</accession>
<accession>P19774</accession>
<accession>P75029</accession>
<accession>P97137</accession>
<accession>Q9R378</accession>
<dbReference type="EMBL" id="AE000516">
    <property type="protein sequence ID" value="AAK46076.1"/>
    <property type="status" value="ALT_INIT"/>
    <property type="molecule type" value="Genomic_DNA"/>
</dbReference>
<dbReference type="EMBL" id="AE000516">
    <property type="protein sequence ID" value="AAK47204.1"/>
    <property type="status" value="ALT_INIT"/>
    <property type="molecule type" value="Genomic_DNA"/>
</dbReference>
<dbReference type="EMBL" id="AE000516">
    <property type="protein sequence ID" value="AAK44637.1"/>
    <property type="status" value="ALT_INIT"/>
    <property type="molecule type" value="Genomic_DNA"/>
</dbReference>
<dbReference type="EMBL" id="AE000516">
    <property type="protein sequence ID" value="AAK47429.1"/>
    <property type="status" value="ALT_INIT"/>
    <property type="molecule type" value="Genomic_DNA"/>
</dbReference>
<dbReference type="PIR" id="H70567">
    <property type="entry name" value="H70567"/>
</dbReference>
<dbReference type="SMR" id="P9WKH8"/>
<dbReference type="KEGG" id="mtc:MT0413"/>
<dbReference type="KEGG" id="mtc:MT1803"/>
<dbReference type="KEGG" id="mtc:MT2881"/>
<dbReference type="KEGG" id="mtc:MT3100"/>
<dbReference type="HOGENOM" id="CLU_027402_4_0_11"/>
<dbReference type="Proteomes" id="UP000001020">
    <property type="component" value="Chromosome"/>
</dbReference>
<dbReference type="GO" id="GO:0003677">
    <property type="term" value="F:DNA binding"/>
    <property type="evidence" value="ECO:0007669"/>
    <property type="project" value="UniProtKB-KW"/>
</dbReference>
<dbReference type="GO" id="GO:0015074">
    <property type="term" value="P:DNA integration"/>
    <property type="evidence" value="ECO:0007669"/>
    <property type="project" value="InterPro"/>
</dbReference>
<dbReference type="GO" id="GO:0006310">
    <property type="term" value="P:DNA recombination"/>
    <property type="evidence" value="ECO:0007669"/>
    <property type="project" value="UniProtKB-KW"/>
</dbReference>
<dbReference type="GO" id="GO:0032196">
    <property type="term" value="P:transposition"/>
    <property type="evidence" value="ECO:0007669"/>
    <property type="project" value="UniProtKB-KW"/>
</dbReference>
<dbReference type="FunFam" id="3.30.420.10:FF:000111">
    <property type="entry name" value="IS3-like element IS987 family transposase"/>
    <property type="match status" value="1"/>
</dbReference>
<dbReference type="Gene3D" id="3.30.420.10">
    <property type="entry name" value="Ribonuclease H-like superfamily/Ribonuclease H"/>
    <property type="match status" value="1"/>
</dbReference>
<dbReference type="InterPro" id="IPR025948">
    <property type="entry name" value="HTH-like_dom"/>
</dbReference>
<dbReference type="InterPro" id="IPR001584">
    <property type="entry name" value="Integrase_cat-core"/>
</dbReference>
<dbReference type="InterPro" id="IPR012337">
    <property type="entry name" value="RNaseH-like_sf"/>
</dbReference>
<dbReference type="InterPro" id="IPR036397">
    <property type="entry name" value="RNaseH_sf"/>
</dbReference>
<dbReference type="InterPro" id="IPR048020">
    <property type="entry name" value="Transpos_IS3"/>
</dbReference>
<dbReference type="InterPro" id="IPR050900">
    <property type="entry name" value="Transposase_IS3/IS150/IS904"/>
</dbReference>
<dbReference type="NCBIfam" id="NF033516">
    <property type="entry name" value="transpos_IS3"/>
    <property type="match status" value="1"/>
</dbReference>
<dbReference type="PANTHER" id="PTHR46889">
    <property type="entry name" value="TRANSPOSASE INSF FOR INSERTION SEQUENCE IS3B-RELATED"/>
    <property type="match status" value="1"/>
</dbReference>
<dbReference type="PANTHER" id="PTHR46889:SF4">
    <property type="entry name" value="TRANSPOSASE INSO FOR INSERTION SEQUENCE ELEMENT IS911B-RELATED"/>
    <property type="match status" value="1"/>
</dbReference>
<dbReference type="Pfam" id="PF13276">
    <property type="entry name" value="HTH_21"/>
    <property type="match status" value="1"/>
</dbReference>
<dbReference type="Pfam" id="PF00665">
    <property type="entry name" value="rve"/>
    <property type="match status" value="1"/>
</dbReference>
<dbReference type="SUPFAM" id="SSF53098">
    <property type="entry name" value="Ribonuclease H-like"/>
    <property type="match status" value="1"/>
</dbReference>
<dbReference type="PROSITE" id="PS50994">
    <property type="entry name" value="INTEGRASE"/>
    <property type="match status" value="1"/>
</dbReference>
<feature type="chain" id="PRO_0000427651" description="Putative transposase for insertion sequence element IS986/IS6110">
    <location>
        <begin position="1"/>
        <end position="278"/>
    </location>
</feature>
<feature type="domain" description="Integrase catalytic" evidence="2">
    <location>
        <begin position="101"/>
        <end position="268"/>
    </location>
</feature>
<feature type="sequence variant" description="In MT2881.">
    <original>S</original>
    <variation>G</variation>
    <location>
        <position position="165"/>
    </location>
</feature>
<evidence type="ECO:0000250" key="1"/>
<evidence type="ECO:0000255" key="2">
    <source>
        <dbReference type="PROSITE-ProRule" id="PRU00457"/>
    </source>
</evidence>
<evidence type="ECO:0000305" key="3"/>
<organism>
    <name type="scientific">Mycobacterium tuberculosis (strain CDC 1551 / Oshkosh)</name>
    <dbReference type="NCBI Taxonomy" id="83331"/>
    <lineage>
        <taxon>Bacteria</taxon>
        <taxon>Bacillati</taxon>
        <taxon>Actinomycetota</taxon>
        <taxon>Actinomycetes</taxon>
        <taxon>Mycobacteriales</taxon>
        <taxon>Mycobacteriaceae</taxon>
        <taxon>Mycobacterium</taxon>
        <taxon>Mycobacterium tuberculosis complex</taxon>
    </lineage>
</organism>
<sequence>MPIAPSTYYDHINREPSRRELRDGELKEHISRVHAANYGVYGARKVWLTLNREGIEVARCTVERLMTKLGLSGTTRGKARRTTIADPATARPADLVQRRFGPPAPNRLWVADLTYVSTWAGFAYVAFVTDAYARRILGWRVASTMATSMVLDAIEQAIWTRQQESVLDLKDVIHHTDRGSQYTSIRFSERLAEAGIQPSVGAVGSSYDNALAETINGLYKTELIKPGKPWRSIEDVELATARWVDWFNHRRLYQYCGDVPPVELEAAYYAQRQRPAAG</sequence>
<comment type="function">
    <text evidence="1">Involved in the transposition of the insertion sequence.</text>
</comment>
<comment type="sequence caution" evidence="3">
    <conflict type="erroneous initiation">
        <sequence resource="EMBL-CDS" id="AAK44637"/>
    </conflict>
</comment>
<comment type="sequence caution" evidence="3">
    <conflict type="erroneous initiation">
        <sequence resource="EMBL-CDS" id="AAK46076"/>
    </conflict>
</comment>
<comment type="sequence caution" evidence="3">
    <conflict type="erroneous initiation">
        <sequence resource="EMBL-CDS" id="AAK47204"/>
    </conflict>
</comment>
<comment type="sequence caution" evidence="3">
    <conflict type="erroneous initiation">
        <sequence resource="EMBL-CDS" id="AAK47429"/>
    </conflict>
</comment>
<protein>
    <recommendedName>
        <fullName>Putative transposase for insertion sequence element IS986/IS6110</fullName>
    </recommendedName>
    <alternativeName>
        <fullName>ORFB</fullName>
    </alternativeName>
</protein>
<proteinExistence type="inferred from homology"/>
<name>TRA9_MYCTO</name>
<gene>
    <name type="ordered locus">MT1803</name>
</gene>
<gene>
    <name type="ordered locus">MT2881</name>
</gene>
<gene>
    <name type="ordered locus">MT0413</name>
</gene>
<gene>
    <name type="ordered locus">MT3100</name>
</gene>